<protein>
    <recommendedName>
        <fullName evidence="1">Bifunctional protein PyrR</fullName>
    </recommendedName>
    <domain>
        <recommendedName>
            <fullName evidence="1">Pyrimidine operon regulatory protein</fullName>
        </recommendedName>
    </domain>
    <domain>
        <recommendedName>
            <fullName evidence="1">Uracil phosphoribosyltransferase</fullName>
            <shortName evidence="1">UPRTase</shortName>
            <ecNumber evidence="1">2.4.2.9</ecNumber>
        </recommendedName>
    </domain>
</protein>
<comment type="function">
    <text evidence="1">Regulates transcriptional attenuation of the pyrimidine nucleotide (pyr) operon by binding in a uridine-dependent manner to specific sites on pyr mRNA. This disrupts an antiterminator hairpin in the RNA and favors formation of a downstream transcription terminator, leading to a reduced expression of downstream genes.</text>
</comment>
<comment type="function">
    <text evidence="1">Also displays a weak uracil phosphoribosyltransferase activity which is not physiologically significant.</text>
</comment>
<comment type="catalytic activity">
    <reaction evidence="1">
        <text>UMP + diphosphate = 5-phospho-alpha-D-ribose 1-diphosphate + uracil</text>
        <dbReference type="Rhea" id="RHEA:13017"/>
        <dbReference type="ChEBI" id="CHEBI:17568"/>
        <dbReference type="ChEBI" id="CHEBI:33019"/>
        <dbReference type="ChEBI" id="CHEBI:57865"/>
        <dbReference type="ChEBI" id="CHEBI:58017"/>
        <dbReference type="EC" id="2.4.2.9"/>
    </reaction>
</comment>
<comment type="subunit">
    <text evidence="1">Homodimer and homohexamer; in equilibrium.</text>
</comment>
<comment type="similarity">
    <text evidence="1">Belongs to the purine/pyrimidine phosphoribosyltransferase family. PyrR subfamily.</text>
</comment>
<organism>
    <name type="scientific">Staphylococcus aureus (strain JH9)</name>
    <dbReference type="NCBI Taxonomy" id="359786"/>
    <lineage>
        <taxon>Bacteria</taxon>
        <taxon>Bacillati</taxon>
        <taxon>Bacillota</taxon>
        <taxon>Bacilli</taxon>
        <taxon>Bacillales</taxon>
        <taxon>Staphylococcaceae</taxon>
        <taxon>Staphylococcus</taxon>
    </lineage>
</organism>
<reference key="1">
    <citation type="submission" date="2007-05" db="EMBL/GenBank/DDBJ databases">
        <title>Complete sequence of chromosome of Staphylococcus aureus subsp. aureus JH9.</title>
        <authorList>
            <consortium name="US DOE Joint Genome Institute"/>
            <person name="Copeland A."/>
            <person name="Lucas S."/>
            <person name="Lapidus A."/>
            <person name="Barry K."/>
            <person name="Detter J.C."/>
            <person name="Glavina del Rio T."/>
            <person name="Hammon N."/>
            <person name="Israni S."/>
            <person name="Pitluck S."/>
            <person name="Chain P."/>
            <person name="Malfatti S."/>
            <person name="Shin M."/>
            <person name="Vergez L."/>
            <person name="Schmutz J."/>
            <person name="Larimer F."/>
            <person name="Land M."/>
            <person name="Hauser L."/>
            <person name="Kyrpides N."/>
            <person name="Kim E."/>
            <person name="Tomasz A."/>
            <person name="Richardson P."/>
        </authorList>
    </citation>
    <scope>NUCLEOTIDE SEQUENCE [LARGE SCALE GENOMIC DNA]</scope>
    <source>
        <strain>JH9</strain>
    </source>
</reference>
<keyword id="KW-0328">Glycosyltransferase</keyword>
<keyword id="KW-0694">RNA-binding</keyword>
<keyword id="KW-0804">Transcription</keyword>
<keyword id="KW-0805">Transcription regulation</keyword>
<keyword id="KW-0806">Transcription termination</keyword>
<keyword id="KW-0808">Transferase</keyword>
<evidence type="ECO:0000255" key="1">
    <source>
        <dbReference type="HAMAP-Rule" id="MF_01219"/>
    </source>
</evidence>
<proteinExistence type="inferred from homology"/>
<accession>A5IS83</accession>
<dbReference type="EC" id="2.4.2.9" evidence="1"/>
<dbReference type="EMBL" id="CP000703">
    <property type="protein sequence ID" value="ABQ49056.1"/>
    <property type="molecule type" value="Genomic_DNA"/>
</dbReference>
<dbReference type="RefSeq" id="WP_000003870.1">
    <property type="nucleotide sequence ID" value="NC_009487.1"/>
</dbReference>
<dbReference type="SMR" id="A5IS83"/>
<dbReference type="KEGG" id="saj:SaurJH9_1257"/>
<dbReference type="HOGENOM" id="CLU_094234_2_1_9"/>
<dbReference type="GO" id="GO:0003723">
    <property type="term" value="F:RNA binding"/>
    <property type="evidence" value="ECO:0007669"/>
    <property type="project" value="UniProtKB-UniRule"/>
</dbReference>
<dbReference type="GO" id="GO:0004845">
    <property type="term" value="F:uracil phosphoribosyltransferase activity"/>
    <property type="evidence" value="ECO:0007669"/>
    <property type="project" value="UniProtKB-UniRule"/>
</dbReference>
<dbReference type="GO" id="GO:0006353">
    <property type="term" value="P:DNA-templated transcription termination"/>
    <property type="evidence" value="ECO:0007669"/>
    <property type="project" value="UniProtKB-UniRule"/>
</dbReference>
<dbReference type="CDD" id="cd06223">
    <property type="entry name" value="PRTases_typeI"/>
    <property type="match status" value="1"/>
</dbReference>
<dbReference type="FunFam" id="3.40.50.2020:FF:000020">
    <property type="entry name" value="Bifunctional protein PyrR"/>
    <property type="match status" value="1"/>
</dbReference>
<dbReference type="Gene3D" id="3.40.50.2020">
    <property type="match status" value="1"/>
</dbReference>
<dbReference type="HAMAP" id="MF_01219">
    <property type="entry name" value="PyrR"/>
    <property type="match status" value="1"/>
</dbReference>
<dbReference type="InterPro" id="IPR000836">
    <property type="entry name" value="PRibTrfase_dom"/>
</dbReference>
<dbReference type="InterPro" id="IPR029057">
    <property type="entry name" value="PRTase-like"/>
</dbReference>
<dbReference type="InterPro" id="IPR023050">
    <property type="entry name" value="PyrR"/>
</dbReference>
<dbReference type="InterPro" id="IPR050137">
    <property type="entry name" value="PyrR_bifunctional"/>
</dbReference>
<dbReference type="NCBIfam" id="NF003546">
    <property type="entry name" value="PRK05205.1-2"/>
    <property type="match status" value="1"/>
</dbReference>
<dbReference type="NCBIfam" id="NF003548">
    <property type="entry name" value="PRK05205.1-4"/>
    <property type="match status" value="1"/>
</dbReference>
<dbReference type="NCBIfam" id="NF003549">
    <property type="entry name" value="PRK05205.1-5"/>
    <property type="match status" value="1"/>
</dbReference>
<dbReference type="PANTHER" id="PTHR11608">
    <property type="entry name" value="BIFUNCTIONAL PROTEIN PYRR"/>
    <property type="match status" value="1"/>
</dbReference>
<dbReference type="PANTHER" id="PTHR11608:SF0">
    <property type="entry name" value="BIFUNCTIONAL PROTEIN PYRR"/>
    <property type="match status" value="1"/>
</dbReference>
<dbReference type="Pfam" id="PF00156">
    <property type="entry name" value="Pribosyltran"/>
    <property type="match status" value="1"/>
</dbReference>
<dbReference type="SUPFAM" id="SSF53271">
    <property type="entry name" value="PRTase-like"/>
    <property type="match status" value="1"/>
</dbReference>
<name>PYRR_STAA9</name>
<sequence>MSERIIMDDAAIQRTVTRIAHEILEYNKGTDNLILLGIKTRGEYLANRIQDKIHQIEQQRIPTGTIDITYFRDDIEHMSSLTTKDAIDIDTDITDKVVIIIDDVLYTGRTVRASLDAILLNARPIKIGLAALVDRGHRELPIRADFVGKNIPTSKEETVSVYLEEMDQRNAVIIK</sequence>
<feature type="chain" id="PRO_1000085658" description="Bifunctional protein PyrR">
    <location>
        <begin position="1"/>
        <end position="175"/>
    </location>
</feature>
<feature type="short sequence motif" description="PRPP-binding" evidence="1">
    <location>
        <begin position="98"/>
        <end position="110"/>
    </location>
</feature>
<gene>
    <name evidence="1" type="primary">pyrR</name>
    <name type="ordered locus">SaurJH9_1257</name>
</gene>